<keyword id="KW-0167">Capsid protein</keyword>
<keyword id="KW-0238">DNA-binding</keyword>
<keyword id="KW-1048">Host nucleus</keyword>
<keyword id="KW-0479">Metal-binding</keyword>
<keyword id="KW-1185">Reference proteome</keyword>
<keyword id="KW-1140">T=1 icosahedral capsid protein</keyword>
<keyword id="KW-1163">Viral penetration into host nucleus</keyword>
<keyword id="KW-0946">Virion</keyword>
<keyword id="KW-1160">Virus entry into host cell</keyword>
<keyword id="KW-0862">Zinc</keyword>
<keyword id="KW-0863">Zinc-finger</keyword>
<organismHost>
    <name type="scientific">Cynanchum acutum</name>
    <dbReference type="NCBI Taxonomy" id="185024"/>
</organismHost>
<organismHost>
    <name type="scientific">Malva parviflora</name>
    <name type="common">Little mallow</name>
    <name type="synonym">Cheeseweed mallow</name>
    <dbReference type="NCBI Taxonomy" id="145753"/>
</organismHost>
<organismHost>
    <name type="scientific">Solanum lycopersicum</name>
    <name type="common">Tomato</name>
    <name type="synonym">Lycopersicon esculentum</name>
    <dbReference type="NCBI Taxonomy" id="4081"/>
</organismHost>
<reference key="1">
    <citation type="journal article" date="1991" name="Virology">
        <title>Tomato yellow leaf curl virus: a whitefly-transmitted geminivirus with a single genomic component.</title>
        <authorList>
            <person name="Navot N."/>
            <person name="Pichersky E."/>
            <person name="Zeidan M."/>
            <person name="Zamir D."/>
            <person name="Czosnek H."/>
        </authorList>
    </citation>
    <scope>NUCLEOTIDE SEQUENCE [GENOMIC DNA]</scope>
</reference>
<reference key="2">
    <citation type="journal article" date="1998" name="Plant J.">
        <title>Nuclear import of the capsid protein of tomato yellow leaf curl virus (TYLCV) in plant and insect cells.</title>
        <authorList>
            <person name="Kunik T."/>
            <person name="Palanichelvam K."/>
            <person name="Czosnek H."/>
            <person name="Citovsky V."/>
            <person name="Gafni Y."/>
        </authorList>
    </citation>
    <scope>SUBCELLULAR LOCATION</scope>
    <scope>NUCLEAR LOCALIZATION SIGNALS</scope>
</reference>
<reference key="3">
    <citation type="journal article" date="1998" name="J. Gen. Virol.">
        <title>The capsid protein of tomato yellow leaf curl virus binds cooperatively to single-stranded DNA.</title>
        <authorList>
            <person name="Palanichelvam K."/>
            <person name="Kunik T."/>
            <person name="Citovsky V."/>
            <person name="Gafni Y."/>
        </authorList>
    </citation>
    <scope>FUNCTION</scope>
</reference>
<reference key="4">
    <citation type="journal article" date="2000" name="Nat. Biotechnol.">
        <title>A genetic system for detection of protein nuclear import and export.</title>
        <authorList>
            <person name="Rhee Y."/>
            <person name="Gurel F."/>
            <person name="Gafni Y."/>
            <person name="Dingwall C."/>
            <person name="Citovsky V."/>
        </authorList>
    </citation>
    <scope>NUCLEAR EXPORT SIGNAL</scope>
</reference>
<reference key="5">
    <citation type="journal article" date="2001" name="Arch. Virol.">
        <title>Tomato yellow leaf curl virus (TYLCV) capsid protein (CP) subunit interactions: implications for viral assembly.</title>
        <authorList>
            <person name="Hallan V."/>
            <person name="Gafni Y."/>
        </authorList>
    </citation>
    <scope>SUBUNIT</scope>
    <scope>MUTAGENESIS OF GLN-135 AND ASP-153</scope>
</reference>
<reference key="6">
    <citation type="journal article" date="2001" name="Virology">
        <title>Functional analysis of proteins involved in movement of the monopartite begomovirus, Tomato yellow leaf curl virus.</title>
        <authorList>
            <person name="Rojas M.R."/>
            <person name="Jiang H."/>
            <person name="Salati R."/>
            <person name="Xoconostle-Cazares B."/>
            <person name="Sudarshana M.R."/>
            <person name="Lucas W.J."/>
            <person name="Gilbertson R.L."/>
        </authorList>
    </citation>
    <scope>SUBCELLULAR LOCATION</scope>
    <scope>FUNCTION</scope>
    <source>
        <strain>Isolate Dominican Republic</strain>
    </source>
</reference>
<proteinExistence type="evidence at protein level"/>
<accession>P27256</accession>
<dbReference type="EMBL" id="X15656">
    <property type="protein sequence ID" value="CAA33686.1"/>
    <property type="molecule type" value="Genomic_DNA"/>
</dbReference>
<dbReference type="PIR" id="A40779">
    <property type="entry name" value="QQCVCL"/>
</dbReference>
<dbReference type="SMR" id="P27256"/>
<dbReference type="Proteomes" id="UP000007547">
    <property type="component" value="Genome"/>
</dbReference>
<dbReference type="GO" id="GO:0043657">
    <property type="term" value="C:host cell"/>
    <property type="evidence" value="ECO:0007669"/>
    <property type="project" value="GOC"/>
</dbReference>
<dbReference type="GO" id="GO:0042025">
    <property type="term" value="C:host cell nucleus"/>
    <property type="evidence" value="ECO:0007669"/>
    <property type="project" value="UniProtKB-SubCell"/>
</dbReference>
<dbReference type="GO" id="GO:0039615">
    <property type="term" value="C:T=1 icosahedral viral capsid"/>
    <property type="evidence" value="ECO:0007669"/>
    <property type="project" value="UniProtKB-KW"/>
</dbReference>
<dbReference type="GO" id="GO:0003677">
    <property type="term" value="F:DNA binding"/>
    <property type="evidence" value="ECO:0007669"/>
    <property type="project" value="UniProtKB-KW"/>
</dbReference>
<dbReference type="GO" id="GO:0005198">
    <property type="term" value="F:structural molecule activity"/>
    <property type="evidence" value="ECO:0007669"/>
    <property type="project" value="InterPro"/>
</dbReference>
<dbReference type="GO" id="GO:0008270">
    <property type="term" value="F:zinc ion binding"/>
    <property type="evidence" value="ECO:0007669"/>
    <property type="project" value="UniProtKB-KW"/>
</dbReference>
<dbReference type="GO" id="GO:0046718">
    <property type="term" value="P:symbiont entry into host cell"/>
    <property type="evidence" value="ECO:0007669"/>
    <property type="project" value="UniProtKB-KW"/>
</dbReference>
<dbReference type="GO" id="GO:0075732">
    <property type="term" value="P:viral penetration into host nucleus"/>
    <property type="evidence" value="ECO:0007669"/>
    <property type="project" value="UniProtKB-KW"/>
</dbReference>
<dbReference type="Gene3D" id="2.60.120.20">
    <property type="match status" value="1"/>
</dbReference>
<dbReference type="InterPro" id="IPR000650">
    <property type="entry name" value="Gem_coat_AR1"/>
</dbReference>
<dbReference type="InterPro" id="IPR000263">
    <property type="entry name" value="GV_A/BR1_coat"/>
</dbReference>
<dbReference type="InterPro" id="IPR029053">
    <property type="entry name" value="Viral_coat"/>
</dbReference>
<dbReference type="Pfam" id="PF00844">
    <property type="entry name" value="Gemini_coat"/>
    <property type="match status" value="1"/>
</dbReference>
<dbReference type="PRINTS" id="PR00224">
    <property type="entry name" value="GEMCOATAR1"/>
</dbReference>
<dbReference type="PRINTS" id="PR00223">
    <property type="entry name" value="GEMCOATARBR1"/>
</dbReference>
<organism>
    <name type="scientific">Tomato yellow leaf curl virus (strain Israel)</name>
    <name type="common">TYLCV</name>
    <dbReference type="NCBI Taxonomy" id="66366"/>
    <lineage>
        <taxon>Viruses</taxon>
        <taxon>Monodnaviria</taxon>
        <taxon>Shotokuvirae</taxon>
        <taxon>Cressdnaviricota</taxon>
        <taxon>Repensiviricetes</taxon>
        <taxon>Geplafuvirales</taxon>
        <taxon>Geminiviridae</taxon>
        <taxon>Begomovirus</taxon>
        <taxon>Tomato yellow leaf curl virus</taxon>
    </lineage>
</organism>
<gene>
    <name type="ORF">V1</name>
</gene>
<name>CAPSD_TYLCI</name>
<protein>
    <recommendedName>
        <fullName>Capsid protein</fullName>
    </recommendedName>
    <alternativeName>
        <fullName>Coat protein</fullName>
        <shortName>CP</shortName>
    </alternativeName>
</protein>
<feature type="chain" id="PRO_0000222195" description="Capsid protein">
    <location>
        <begin position="1"/>
        <end position="260"/>
    </location>
</feature>
<feature type="zinc finger region" evidence="2">
    <location>
        <begin position="69"/>
        <end position="86"/>
    </location>
</feature>
<feature type="short sequence motif" description="Bipartite nuclear localization signal" evidence="2">
    <location>
        <begin position="3"/>
        <end position="20"/>
    </location>
</feature>
<feature type="short sequence motif" description="Nuclear localization signal" evidence="2">
    <location>
        <begin position="41"/>
        <end position="55"/>
    </location>
</feature>
<feature type="short sequence motif" description="Nuclear export signal" evidence="2">
    <location>
        <begin position="102"/>
        <end position="123"/>
    </location>
</feature>
<feature type="short sequence motif" description="Bipartite nuclear localization signal" evidence="2">
    <location>
        <begin position="202"/>
        <end position="251"/>
    </location>
</feature>
<feature type="mutagenesis site" description="90% loss of homomultimerization." evidence="3">
    <original>Q</original>
    <variation>H</variation>
    <location>
        <position position="135"/>
    </location>
</feature>
<feature type="mutagenesis site" description="90% loss of homomultimerization." evidence="3">
    <original>D</original>
    <variation>E</variation>
    <location>
        <position position="153"/>
    </location>
</feature>
<evidence type="ECO:0000250" key="1"/>
<evidence type="ECO:0000255" key="2"/>
<evidence type="ECO:0000269" key="3">
    <source>
    </source>
</evidence>
<evidence type="ECO:0000269" key="4">
    <source>
    </source>
</evidence>
<evidence type="ECO:0000269" key="5">
    <source>
    </source>
</evidence>
<evidence type="ECO:0000269" key="6">
    <source>
    </source>
</evidence>
<evidence type="ECO:0000305" key="7"/>
<comment type="function">
    <text evidence="4 6">Encapsidates the viral genome into characteristic twinned ('geminate') particles. Binds the genomic viral ssDNA and shuttles it into and out of the cell nucleus. Plays a role in protection of the genome from degradation, virus acquisition and transmission by insect vectors, infectivity, and systemic movement. The CP of monopartite geminiviruses is absolutely essential for virus movement.</text>
</comment>
<comment type="subunit">
    <text evidence="1">Homomultimer. Binds to single-stranded and double-stranded viral DNA. Interacts (via nuclear localization signals) with host importin alpha-1a (By similarity).</text>
</comment>
<comment type="subcellular location">
    <subcellularLocation>
        <location evidence="7">Virion</location>
    </subcellularLocation>
    <subcellularLocation>
        <location evidence="4 5">Host nucleus</location>
    </subcellularLocation>
    <text>It is actively transported into the host cell nucleus. It may be exported out of the nucleus through a nuclear export signal for cell-to-cell movement and spread.</text>
</comment>
<comment type="similarity">
    <text evidence="7">Belongs to the geminiviridae capsid protein family.</text>
</comment>
<sequence length="260" mass="30320">MSKRPGDIIISTPVSKVRRRLNFDSPYSSRAAVPIVQGTNKRRSWTYRPMYRKPRIYRMYRSPDVPRGCEGPCKVQSYEQRDDIKHTGIVRCVSDVTRGSGITHRVGKRFCVKSIYFLGKVWMDENIKKQNHTNQVMFFLVRDRRPYGNSPMDFGQVFNMFDNEPSTATVKNDLRDRFQVMRKFHATVIGGPSGMKEQALVKRFFKINSHVTLFIFIQEAAKYENHTENALLLYMACTHASNPVYATMKIRIYFYDSISN</sequence>